<accession>Q0U3N7</accession>
<name>MKAR_PHANO</name>
<gene>
    <name type="ORF">SNOG_13627</name>
</gene>
<protein>
    <recommendedName>
        <fullName evidence="4">Very-long-chain 3-oxoacyl-CoA reductase</fullName>
        <ecNumber evidence="4">1.1.1.330</ecNumber>
    </recommendedName>
    <alternativeName>
        <fullName evidence="4">3-ketoacyl-CoA reductase</fullName>
        <shortName evidence="4">3-ketoreductase</shortName>
        <shortName evidence="4">KAR</shortName>
    </alternativeName>
    <alternativeName>
        <fullName evidence="4">Microsomal beta-keto-reductase</fullName>
    </alternativeName>
</protein>
<sequence length="341" mass="36959">MSSITETFGVRIDATNSLVQAAIYGFLLAGVAAFAAPIVSTIRVLLSLFVLPGKSLSSFGPRGTWALITGASDGIGKEFALALAAKGYNLILVSRTQSKLDSLAADISSKYGPKISTKTLAMDFAQNKDSDYNNLKKLVDGLDVSILINNVGLSHSIPVPFAETPKQEMTDIIMINCMATLRVTQLLTPGMISRKRGLILTMASFGGFFPTPLLATYSGSKAFLQQWSSALGSELEPHGVHVQCVQSHLITTAMSKIRKPSALVPNPKQFVKATLSKLGRSGGAQNVAFTSTPYWSHGIMQWFLSRFLGERSPIVVKINRGMHEDIRRRALRKAERDAKKQ</sequence>
<comment type="function">
    <text evidence="4">Component of the microsomal membrane bound fatty acid elongation system, which produces the 26-carbon very long-chain fatty acids (VLCFA) from palmitate. Catalyzes the reduction of the 3-ketoacyl-CoA intermediate that is formed in each cycle of fatty acid elongation. VLCFAs serve as precursors for ceramide and sphingolipids.</text>
</comment>
<comment type="catalytic activity">
    <reaction evidence="4">
        <text>a very-long-chain (3R)-3-hydroxyacyl-CoA + NADP(+) = a very-long-chain 3-oxoacyl-CoA + NADPH + H(+)</text>
        <dbReference type="Rhea" id="RHEA:48680"/>
        <dbReference type="ChEBI" id="CHEBI:15378"/>
        <dbReference type="ChEBI" id="CHEBI:57783"/>
        <dbReference type="ChEBI" id="CHEBI:58349"/>
        <dbReference type="ChEBI" id="CHEBI:85440"/>
        <dbReference type="ChEBI" id="CHEBI:90725"/>
        <dbReference type="EC" id="1.1.1.330"/>
    </reaction>
</comment>
<comment type="pathway">
    <text evidence="3">Lipid metabolism; fatty acid biosynthesis.</text>
</comment>
<comment type="subcellular location">
    <subcellularLocation>
        <location evidence="4">Endoplasmic reticulum membrane</location>
        <topology evidence="4">Single-pass membrane protein</topology>
    </subcellularLocation>
</comment>
<comment type="similarity">
    <text evidence="4">Belongs to the short-chain dehydrogenases/reductases (SDR) family.</text>
</comment>
<proteinExistence type="inferred from homology"/>
<evidence type="ECO:0000250" key="1">
    <source>
        <dbReference type="UniProtKB" id="L0E2Z4"/>
    </source>
</evidence>
<evidence type="ECO:0000250" key="2">
    <source>
        <dbReference type="UniProtKB" id="O93868"/>
    </source>
</evidence>
<evidence type="ECO:0000250" key="3">
    <source>
        <dbReference type="UniProtKB" id="P38286"/>
    </source>
</evidence>
<evidence type="ECO:0000255" key="4">
    <source>
        <dbReference type="HAMAP-Rule" id="MF_03107"/>
    </source>
</evidence>
<feature type="chain" id="PRO_0000357317" description="Very-long-chain 3-oxoacyl-CoA reductase">
    <location>
        <begin position="1"/>
        <end position="341"/>
    </location>
</feature>
<feature type="transmembrane region" description="Helical" evidence="4">
    <location>
        <begin position="22"/>
        <end position="42"/>
    </location>
</feature>
<feature type="active site" description="Proton donor" evidence="2">
    <location>
        <position position="217"/>
    </location>
</feature>
<feature type="active site" description="Lowers pKa of active site Tyr" evidence="2">
    <location>
        <position position="221"/>
    </location>
</feature>
<feature type="binding site" evidence="1">
    <location>
        <position position="67"/>
    </location>
    <ligand>
        <name>NADP(+)</name>
        <dbReference type="ChEBI" id="CHEBI:58349"/>
    </ligand>
</feature>
<feature type="binding site" evidence="1">
    <location>
        <position position="123"/>
    </location>
    <ligand>
        <name>NADP(+)</name>
        <dbReference type="ChEBI" id="CHEBI:58349"/>
    </ligand>
</feature>
<feature type="binding site" evidence="1">
    <location>
        <position position="131"/>
    </location>
    <ligand>
        <name>NADP(+)</name>
        <dbReference type="ChEBI" id="CHEBI:58349"/>
    </ligand>
</feature>
<feature type="binding site" evidence="2">
    <location>
        <position position="150"/>
    </location>
    <ligand>
        <name>NADP(+)</name>
        <dbReference type="ChEBI" id="CHEBI:58349"/>
    </ligand>
</feature>
<feature type="binding site" evidence="2">
    <location>
        <position position="217"/>
    </location>
    <ligand>
        <name>NADP(+)</name>
        <dbReference type="ChEBI" id="CHEBI:58349"/>
    </ligand>
</feature>
<feature type="binding site" evidence="2">
    <location>
        <position position="221"/>
    </location>
    <ligand>
        <name>NADP(+)</name>
        <dbReference type="ChEBI" id="CHEBI:58349"/>
    </ligand>
</feature>
<feature type="binding site" evidence="2">
    <location>
        <position position="250"/>
    </location>
    <ligand>
        <name>NADP(+)</name>
        <dbReference type="ChEBI" id="CHEBI:58349"/>
    </ligand>
</feature>
<feature type="binding site" evidence="1">
    <location>
        <position position="252"/>
    </location>
    <ligand>
        <name>NADP(+)</name>
        <dbReference type="ChEBI" id="CHEBI:58349"/>
    </ligand>
</feature>
<keyword id="KW-0256">Endoplasmic reticulum</keyword>
<keyword id="KW-0275">Fatty acid biosynthesis</keyword>
<keyword id="KW-0276">Fatty acid metabolism</keyword>
<keyword id="KW-0444">Lipid biosynthesis</keyword>
<keyword id="KW-0443">Lipid metabolism</keyword>
<keyword id="KW-0472">Membrane</keyword>
<keyword id="KW-0521">NADP</keyword>
<keyword id="KW-0560">Oxidoreductase</keyword>
<keyword id="KW-0812">Transmembrane</keyword>
<keyword id="KW-1133">Transmembrane helix</keyword>
<organism>
    <name type="scientific">Phaeosphaeria nodorum (strain SN15 / ATCC MYA-4574 / FGSC 10173)</name>
    <name type="common">Glume blotch fungus</name>
    <name type="synonym">Parastagonospora nodorum</name>
    <dbReference type="NCBI Taxonomy" id="321614"/>
    <lineage>
        <taxon>Eukaryota</taxon>
        <taxon>Fungi</taxon>
        <taxon>Dikarya</taxon>
        <taxon>Ascomycota</taxon>
        <taxon>Pezizomycotina</taxon>
        <taxon>Dothideomycetes</taxon>
        <taxon>Pleosporomycetidae</taxon>
        <taxon>Pleosporales</taxon>
        <taxon>Pleosporineae</taxon>
        <taxon>Phaeosphaeriaceae</taxon>
        <taxon>Parastagonospora</taxon>
    </lineage>
</organism>
<dbReference type="EC" id="1.1.1.330" evidence="4"/>
<dbReference type="EMBL" id="CH445351">
    <property type="protein sequence ID" value="EAT79074.1"/>
    <property type="molecule type" value="Genomic_DNA"/>
</dbReference>
<dbReference type="RefSeq" id="XP_001803832.1">
    <property type="nucleotide sequence ID" value="XM_001803780.1"/>
</dbReference>
<dbReference type="SMR" id="Q0U3N7"/>
<dbReference type="FunCoup" id="Q0U3N7">
    <property type="interactions" value="659"/>
</dbReference>
<dbReference type="STRING" id="321614.Q0U3N7"/>
<dbReference type="EnsemblFungi" id="SNOT_13627">
    <property type="protein sequence ID" value="SNOT_13627"/>
    <property type="gene ID" value="SNOG_13627"/>
</dbReference>
<dbReference type="GeneID" id="5980752"/>
<dbReference type="KEGG" id="pno:SNOG_13627"/>
<dbReference type="VEuPathDB" id="FungiDB:JI435_136270"/>
<dbReference type="eggNOG" id="KOG1014">
    <property type="taxonomic scope" value="Eukaryota"/>
</dbReference>
<dbReference type="HOGENOM" id="CLU_010194_38_0_1"/>
<dbReference type="InParanoid" id="Q0U3N7"/>
<dbReference type="OMA" id="LVAPGMM"/>
<dbReference type="OrthoDB" id="5545019at2759"/>
<dbReference type="UniPathway" id="UPA00094"/>
<dbReference type="Proteomes" id="UP000001055">
    <property type="component" value="Unassembled WGS sequence"/>
</dbReference>
<dbReference type="GO" id="GO:0005783">
    <property type="term" value="C:endoplasmic reticulum"/>
    <property type="evidence" value="ECO:0000318"/>
    <property type="project" value="GO_Central"/>
</dbReference>
<dbReference type="GO" id="GO:0005789">
    <property type="term" value="C:endoplasmic reticulum membrane"/>
    <property type="evidence" value="ECO:0007669"/>
    <property type="project" value="UniProtKB-SubCell"/>
</dbReference>
<dbReference type="GO" id="GO:0045703">
    <property type="term" value="F:ketoreductase activity"/>
    <property type="evidence" value="ECO:0007669"/>
    <property type="project" value="UniProtKB-UniRule"/>
</dbReference>
<dbReference type="GO" id="GO:0141040">
    <property type="term" value="F:very-long-chain 3-oxoacyl-CoA reductase activity"/>
    <property type="evidence" value="ECO:0007669"/>
    <property type="project" value="UniProtKB-EC"/>
</dbReference>
<dbReference type="GO" id="GO:0030497">
    <property type="term" value="P:fatty acid elongation"/>
    <property type="evidence" value="ECO:0000318"/>
    <property type="project" value="GO_Central"/>
</dbReference>
<dbReference type="GO" id="GO:0030148">
    <property type="term" value="P:sphingolipid biosynthetic process"/>
    <property type="evidence" value="ECO:0007669"/>
    <property type="project" value="EnsemblFungi"/>
</dbReference>
<dbReference type="GO" id="GO:0042761">
    <property type="term" value="P:very long-chain fatty acid biosynthetic process"/>
    <property type="evidence" value="ECO:0007669"/>
    <property type="project" value="EnsemblFungi"/>
</dbReference>
<dbReference type="CDD" id="cd05356">
    <property type="entry name" value="17beta-HSD1_like_SDR_c"/>
    <property type="match status" value="1"/>
</dbReference>
<dbReference type="FunFam" id="3.40.50.720:FF:000317">
    <property type="entry name" value="Very-long-chain 3-oxoacyl-CoA reductase"/>
    <property type="match status" value="1"/>
</dbReference>
<dbReference type="Gene3D" id="3.40.50.720">
    <property type="entry name" value="NAD(P)-binding Rossmann-like Domain"/>
    <property type="match status" value="1"/>
</dbReference>
<dbReference type="HAMAP" id="MF_03107">
    <property type="entry name" value="3_ketoreductase"/>
    <property type="match status" value="1"/>
</dbReference>
<dbReference type="InterPro" id="IPR027533">
    <property type="entry name" value="3_ketoreductase_fungal"/>
</dbReference>
<dbReference type="InterPro" id="IPR036291">
    <property type="entry name" value="NAD(P)-bd_dom_sf"/>
</dbReference>
<dbReference type="InterPro" id="IPR020904">
    <property type="entry name" value="Sc_DH/Rdtase_CS"/>
</dbReference>
<dbReference type="InterPro" id="IPR002347">
    <property type="entry name" value="SDR_fam"/>
</dbReference>
<dbReference type="PANTHER" id="PTHR43086:SF2">
    <property type="entry name" value="HYDROXYSTEROID DEHYDROGENASE-LIKE PROTEIN 1"/>
    <property type="match status" value="1"/>
</dbReference>
<dbReference type="PANTHER" id="PTHR43086">
    <property type="entry name" value="VERY-LONG-CHAIN 3-OXOOACYL-COA REDUCTASE"/>
    <property type="match status" value="1"/>
</dbReference>
<dbReference type="Pfam" id="PF00106">
    <property type="entry name" value="adh_short"/>
    <property type="match status" value="1"/>
</dbReference>
<dbReference type="PIRSF" id="PIRSF000126">
    <property type="entry name" value="11-beta-HSD1"/>
    <property type="match status" value="1"/>
</dbReference>
<dbReference type="PRINTS" id="PR00081">
    <property type="entry name" value="GDHRDH"/>
</dbReference>
<dbReference type="SUPFAM" id="SSF51735">
    <property type="entry name" value="NAD(P)-binding Rossmann-fold domains"/>
    <property type="match status" value="1"/>
</dbReference>
<dbReference type="PROSITE" id="PS00061">
    <property type="entry name" value="ADH_SHORT"/>
    <property type="match status" value="1"/>
</dbReference>
<reference key="1">
    <citation type="journal article" date="2007" name="Plant Cell">
        <title>Dothideomycete-plant interactions illuminated by genome sequencing and EST analysis of the wheat pathogen Stagonospora nodorum.</title>
        <authorList>
            <person name="Hane J.K."/>
            <person name="Lowe R.G.T."/>
            <person name="Solomon P.S."/>
            <person name="Tan K.-C."/>
            <person name="Schoch C.L."/>
            <person name="Spatafora J.W."/>
            <person name="Crous P.W."/>
            <person name="Kodira C.D."/>
            <person name="Birren B.W."/>
            <person name="Galagan J.E."/>
            <person name="Torriani S.F.F."/>
            <person name="McDonald B.A."/>
            <person name="Oliver R.P."/>
        </authorList>
    </citation>
    <scope>NUCLEOTIDE SEQUENCE [LARGE SCALE GENOMIC DNA]</scope>
    <source>
        <strain>SN15 / ATCC MYA-4574 / FGSC 10173</strain>
    </source>
</reference>